<reference key="1">
    <citation type="journal article" date="2003" name="Nat. Genet.">
        <title>Comparative analysis of the genome sequences of Bordetella pertussis, Bordetella parapertussis and Bordetella bronchiseptica.</title>
        <authorList>
            <person name="Parkhill J."/>
            <person name="Sebaihia M."/>
            <person name="Preston A."/>
            <person name="Murphy L.D."/>
            <person name="Thomson N.R."/>
            <person name="Harris D.E."/>
            <person name="Holden M.T.G."/>
            <person name="Churcher C.M."/>
            <person name="Bentley S.D."/>
            <person name="Mungall K.L."/>
            <person name="Cerdeno-Tarraga A.-M."/>
            <person name="Temple L."/>
            <person name="James K.D."/>
            <person name="Harris B."/>
            <person name="Quail M.A."/>
            <person name="Achtman M."/>
            <person name="Atkin R."/>
            <person name="Baker S."/>
            <person name="Basham D."/>
            <person name="Bason N."/>
            <person name="Cherevach I."/>
            <person name="Chillingworth T."/>
            <person name="Collins M."/>
            <person name="Cronin A."/>
            <person name="Davis P."/>
            <person name="Doggett J."/>
            <person name="Feltwell T."/>
            <person name="Goble A."/>
            <person name="Hamlin N."/>
            <person name="Hauser H."/>
            <person name="Holroyd S."/>
            <person name="Jagels K."/>
            <person name="Leather S."/>
            <person name="Moule S."/>
            <person name="Norberczak H."/>
            <person name="O'Neil S."/>
            <person name="Ormond D."/>
            <person name="Price C."/>
            <person name="Rabbinowitsch E."/>
            <person name="Rutter S."/>
            <person name="Sanders M."/>
            <person name="Saunders D."/>
            <person name="Seeger K."/>
            <person name="Sharp S."/>
            <person name="Simmonds M."/>
            <person name="Skelton J."/>
            <person name="Squares R."/>
            <person name="Squares S."/>
            <person name="Stevens K."/>
            <person name="Unwin L."/>
            <person name="Whitehead S."/>
            <person name="Barrell B.G."/>
            <person name="Maskell D.J."/>
        </authorList>
    </citation>
    <scope>NUCLEOTIDE SEQUENCE [LARGE SCALE GENOMIC DNA]</scope>
    <source>
        <strain>ATCC BAA-588 / NCTC 13252 / RB50</strain>
    </source>
</reference>
<protein>
    <recommendedName>
        <fullName evidence="1">4-hydroxy-tetrahydrodipicolinate reductase</fullName>
        <shortName evidence="1">HTPA reductase</shortName>
        <ecNumber evidence="1">1.17.1.8</ecNumber>
    </recommendedName>
</protein>
<proteinExistence type="inferred from homology"/>
<dbReference type="EC" id="1.17.1.8" evidence="1"/>
<dbReference type="EMBL" id="BX640449">
    <property type="protein sequence ID" value="CAE34307.1"/>
    <property type="molecule type" value="Genomic_DNA"/>
</dbReference>
<dbReference type="RefSeq" id="WP_010926993.1">
    <property type="nucleotide sequence ID" value="NC_002927.3"/>
</dbReference>
<dbReference type="SMR" id="Q7WGH5"/>
<dbReference type="GeneID" id="93205282"/>
<dbReference type="KEGG" id="bbr:BB3944"/>
<dbReference type="eggNOG" id="COG0289">
    <property type="taxonomic scope" value="Bacteria"/>
</dbReference>
<dbReference type="HOGENOM" id="CLU_047479_2_1_4"/>
<dbReference type="UniPathway" id="UPA00034">
    <property type="reaction ID" value="UER00018"/>
</dbReference>
<dbReference type="Proteomes" id="UP000001027">
    <property type="component" value="Chromosome"/>
</dbReference>
<dbReference type="GO" id="GO:0005829">
    <property type="term" value="C:cytosol"/>
    <property type="evidence" value="ECO:0007669"/>
    <property type="project" value="TreeGrafter"/>
</dbReference>
<dbReference type="GO" id="GO:0008839">
    <property type="term" value="F:4-hydroxy-tetrahydrodipicolinate reductase"/>
    <property type="evidence" value="ECO:0007669"/>
    <property type="project" value="UniProtKB-EC"/>
</dbReference>
<dbReference type="GO" id="GO:0051287">
    <property type="term" value="F:NAD binding"/>
    <property type="evidence" value="ECO:0007669"/>
    <property type="project" value="UniProtKB-UniRule"/>
</dbReference>
<dbReference type="GO" id="GO:0050661">
    <property type="term" value="F:NADP binding"/>
    <property type="evidence" value="ECO:0007669"/>
    <property type="project" value="UniProtKB-UniRule"/>
</dbReference>
<dbReference type="GO" id="GO:0016726">
    <property type="term" value="F:oxidoreductase activity, acting on CH or CH2 groups, NAD or NADP as acceptor"/>
    <property type="evidence" value="ECO:0007669"/>
    <property type="project" value="UniProtKB-UniRule"/>
</dbReference>
<dbReference type="GO" id="GO:0019877">
    <property type="term" value="P:diaminopimelate biosynthetic process"/>
    <property type="evidence" value="ECO:0007669"/>
    <property type="project" value="UniProtKB-UniRule"/>
</dbReference>
<dbReference type="GO" id="GO:0009089">
    <property type="term" value="P:lysine biosynthetic process via diaminopimelate"/>
    <property type="evidence" value="ECO:0007669"/>
    <property type="project" value="UniProtKB-UniRule"/>
</dbReference>
<dbReference type="CDD" id="cd02274">
    <property type="entry name" value="DHDPR_N"/>
    <property type="match status" value="1"/>
</dbReference>
<dbReference type="FunFam" id="3.30.360.10:FF:000004">
    <property type="entry name" value="4-hydroxy-tetrahydrodipicolinate reductase"/>
    <property type="match status" value="1"/>
</dbReference>
<dbReference type="FunFam" id="3.40.50.720:FF:000048">
    <property type="entry name" value="4-hydroxy-tetrahydrodipicolinate reductase"/>
    <property type="match status" value="1"/>
</dbReference>
<dbReference type="Gene3D" id="3.30.360.10">
    <property type="entry name" value="Dihydrodipicolinate Reductase, domain 2"/>
    <property type="match status" value="1"/>
</dbReference>
<dbReference type="Gene3D" id="3.40.50.720">
    <property type="entry name" value="NAD(P)-binding Rossmann-like Domain"/>
    <property type="match status" value="1"/>
</dbReference>
<dbReference type="HAMAP" id="MF_00102">
    <property type="entry name" value="DapB"/>
    <property type="match status" value="1"/>
</dbReference>
<dbReference type="InterPro" id="IPR022663">
    <property type="entry name" value="DapB_C"/>
</dbReference>
<dbReference type="InterPro" id="IPR000846">
    <property type="entry name" value="DapB_N"/>
</dbReference>
<dbReference type="InterPro" id="IPR022664">
    <property type="entry name" value="DapB_N_CS"/>
</dbReference>
<dbReference type="InterPro" id="IPR023940">
    <property type="entry name" value="DHDPR_bac"/>
</dbReference>
<dbReference type="InterPro" id="IPR036291">
    <property type="entry name" value="NAD(P)-bd_dom_sf"/>
</dbReference>
<dbReference type="NCBIfam" id="TIGR00036">
    <property type="entry name" value="dapB"/>
    <property type="match status" value="1"/>
</dbReference>
<dbReference type="PANTHER" id="PTHR20836:SF0">
    <property type="entry name" value="4-HYDROXY-TETRAHYDRODIPICOLINATE REDUCTASE 1, CHLOROPLASTIC-RELATED"/>
    <property type="match status" value="1"/>
</dbReference>
<dbReference type="PANTHER" id="PTHR20836">
    <property type="entry name" value="DIHYDRODIPICOLINATE REDUCTASE"/>
    <property type="match status" value="1"/>
</dbReference>
<dbReference type="Pfam" id="PF05173">
    <property type="entry name" value="DapB_C"/>
    <property type="match status" value="1"/>
</dbReference>
<dbReference type="Pfam" id="PF01113">
    <property type="entry name" value="DapB_N"/>
    <property type="match status" value="1"/>
</dbReference>
<dbReference type="PIRSF" id="PIRSF000161">
    <property type="entry name" value="DHPR"/>
    <property type="match status" value="1"/>
</dbReference>
<dbReference type="SUPFAM" id="SSF55347">
    <property type="entry name" value="Glyceraldehyde-3-phosphate dehydrogenase-like, C-terminal domain"/>
    <property type="match status" value="1"/>
</dbReference>
<dbReference type="SUPFAM" id="SSF51735">
    <property type="entry name" value="NAD(P)-binding Rossmann-fold domains"/>
    <property type="match status" value="1"/>
</dbReference>
<dbReference type="PROSITE" id="PS01298">
    <property type="entry name" value="DAPB"/>
    <property type="match status" value="1"/>
</dbReference>
<name>DAPB_BORBR</name>
<evidence type="ECO:0000255" key="1">
    <source>
        <dbReference type="HAMAP-Rule" id="MF_00102"/>
    </source>
</evidence>
<evidence type="ECO:0000305" key="2"/>
<keyword id="KW-0028">Amino-acid biosynthesis</keyword>
<keyword id="KW-0963">Cytoplasm</keyword>
<keyword id="KW-0220">Diaminopimelate biosynthesis</keyword>
<keyword id="KW-0457">Lysine biosynthesis</keyword>
<keyword id="KW-0520">NAD</keyword>
<keyword id="KW-0521">NADP</keyword>
<keyword id="KW-0560">Oxidoreductase</keyword>
<organism>
    <name type="scientific">Bordetella bronchiseptica (strain ATCC BAA-588 / NCTC 13252 / RB50)</name>
    <name type="common">Alcaligenes bronchisepticus</name>
    <dbReference type="NCBI Taxonomy" id="257310"/>
    <lineage>
        <taxon>Bacteria</taxon>
        <taxon>Pseudomonadati</taxon>
        <taxon>Pseudomonadota</taxon>
        <taxon>Betaproteobacteria</taxon>
        <taxon>Burkholderiales</taxon>
        <taxon>Alcaligenaceae</taxon>
        <taxon>Bordetella</taxon>
    </lineage>
</organism>
<sequence>MTQATPQRIAIAGASGRMGQMLIEAVLDTEGVELAVALDRAGSPSIGQDAGAALGRPCGVTITDQLDALAQADCLIDFTRPEGTLQHLQACLRHDVKMVIGTTGFDSSGRAEIEVAAQKIAIVFAPNMSVGVNATLKLLDMAARILNSGYDVEIFEAHHRNKVDAPSGTALIMGETVASAWDVALPDVATWTRHGDTGVRKPGTIGFSVVRGGDIVGDHTVFFCGTGERIEISHRSSSRATYAQGAVRAARFLARQDNGLYDMQAVLGL</sequence>
<feature type="chain" id="PRO_0000141413" description="4-hydroxy-tetrahydrodipicolinate reductase">
    <location>
        <begin position="1"/>
        <end position="269"/>
    </location>
</feature>
<feature type="active site" description="Proton donor/acceptor" evidence="1">
    <location>
        <position position="158"/>
    </location>
</feature>
<feature type="active site" description="Proton donor" evidence="1">
    <location>
        <position position="162"/>
    </location>
</feature>
<feature type="binding site" evidence="1">
    <location>
        <begin position="13"/>
        <end position="18"/>
    </location>
    <ligand>
        <name>NAD(+)</name>
        <dbReference type="ChEBI" id="CHEBI:57540"/>
    </ligand>
</feature>
<feature type="binding site" evidence="1">
    <location>
        <position position="39"/>
    </location>
    <ligand>
        <name>NAD(+)</name>
        <dbReference type="ChEBI" id="CHEBI:57540"/>
    </ligand>
</feature>
<feature type="binding site" evidence="1">
    <location>
        <position position="40"/>
    </location>
    <ligand>
        <name>NADP(+)</name>
        <dbReference type="ChEBI" id="CHEBI:58349"/>
    </ligand>
</feature>
<feature type="binding site" evidence="1">
    <location>
        <begin position="101"/>
        <end position="103"/>
    </location>
    <ligand>
        <name>NAD(+)</name>
        <dbReference type="ChEBI" id="CHEBI:57540"/>
    </ligand>
</feature>
<feature type="binding site" evidence="1">
    <location>
        <begin position="125"/>
        <end position="128"/>
    </location>
    <ligand>
        <name>NAD(+)</name>
        <dbReference type="ChEBI" id="CHEBI:57540"/>
    </ligand>
</feature>
<feature type="binding site" evidence="1">
    <location>
        <position position="159"/>
    </location>
    <ligand>
        <name>(S)-2,3,4,5-tetrahydrodipicolinate</name>
        <dbReference type="ChEBI" id="CHEBI:16845"/>
    </ligand>
</feature>
<feature type="binding site" evidence="1">
    <location>
        <begin position="168"/>
        <end position="169"/>
    </location>
    <ligand>
        <name>(S)-2,3,4,5-tetrahydrodipicolinate</name>
        <dbReference type="ChEBI" id="CHEBI:16845"/>
    </ligand>
</feature>
<gene>
    <name evidence="1" type="primary">dapB</name>
    <name type="ordered locus">BB3944</name>
</gene>
<comment type="function">
    <text evidence="1">Catalyzes the conversion of 4-hydroxy-tetrahydrodipicolinate (HTPA) to tetrahydrodipicolinate.</text>
</comment>
<comment type="catalytic activity">
    <reaction evidence="1">
        <text>(S)-2,3,4,5-tetrahydrodipicolinate + NAD(+) + H2O = (2S,4S)-4-hydroxy-2,3,4,5-tetrahydrodipicolinate + NADH + H(+)</text>
        <dbReference type="Rhea" id="RHEA:35323"/>
        <dbReference type="ChEBI" id="CHEBI:15377"/>
        <dbReference type="ChEBI" id="CHEBI:15378"/>
        <dbReference type="ChEBI" id="CHEBI:16845"/>
        <dbReference type="ChEBI" id="CHEBI:57540"/>
        <dbReference type="ChEBI" id="CHEBI:57945"/>
        <dbReference type="ChEBI" id="CHEBI:67139"/>
        <dbReference type="EC" id="1.17.1.8"/>
    </reaction>
</comment>
<comment type="catalytic activity">
    <reaction evidence="1">
        <text>(S)-2,3,4,5-tetrahydrodipicolinate + NADP(+) + H2O = (2S,4S)-4-hydroxy-2,3,4,5-tetrahydrodipicolinate + NADPH + H(+)</text>
        <dbReference type="Rhea" id="RHEA:35331"/>
        <dbReference type="ChEBI" id="CHEBI:15377"/>
        <dbReference type="ChEBI" id="CHEBI:15378"/>
        <dbReference type="ChEBI" id="CHEBI:16845"/>
        <dbReference type="ChEBI" id="CHEBI:57783"/>
        <dbReference type="ChEBI" id="CHEBI:58349"/>
        <dbReference type="ChEBI" id="CHEBI:67139"/>
        <dbReference type="EC" id="1.17.1.8"/>
    </reaction>
</comment>
<comment type="pathway">
    <text evidence="1">Amino-acid biosynthesis; L-lysine biosynthesis via DAP pathway; (S)-tetrahydrodipicolinate from L-aspartate: step 4/4.</text>
</comment>
<comment type="subcellular location">
    <subcellularLocation>
        <location evidence="1">Cytoplasm</location>
    </subcellularLocation>
</comment>
<comment type="similarity">
    <text evidence="1">Belongs to the DapB family.</text>
</comment>
<comment type="caution">
    <text evidence="2">Was originally thought to be a dihydrodipicolinate reductase (DHDPR), catalyzing the conversion of dihydrodipicolinate to tetrahydrodipicolinate. However, it was shown in E.coli that the substrate of the enzymatic reaction is not dihydrodipicolinate (DHDP) but in fact (2S,4S)-4-hydroxy-2,3,4,5-tetrahydrodipicolinic acid (HTPA), the product released by the DapA-catalyzed reaction.</text>
</comment>
<accession>Q7WGH5</accession>